<reference key="1">
    <citation type="journal article" date="1998" name="Science">
        <title>Genome sequence of the nematode C. elegans: a platform for investigating biology.</title>
        <authorList>
            <consortium name="The C. elegans sequencing consortium"/>
        </authorList>
    </citation>
    <scope>NUCLEOTIDE SEQUENCE [LARGE SCALE GENOMIC DNA]</scope>
    <source>
        <strain>Bristol N2</strain>
    </source>
</reference>
<keyword id="KW-0175">Coiled coil</keyword>
<keyword id="KW-0268">Exocytosis</keyword>
<keyword id="KW-0653">Protein transport</keyword>
<keyword id="KW-1185">Reference proteome</keyword>
<keyword id="KW-0813">Transport</keyword>
<feature type="chain" id="PRO_0000118946" description="Exocyst complex component 5">
    <location>
        <begin position="1"/>
        <end position="659"/>
    </location>
</feature>
<feature type="coiled-coil region" evidence="2">
    <location>
        <begin position="1"/>
        <end position="58"/>
    </location>
</feature>
<organism>
    <name type="scientific">Caenorhabditis elegans</name>
    <dbReference type="NCBI Taxonomy" id="6239"/>
    <lineage>
        <taxon>Eukaryota</taxon>
        <taxon>Metazoa</taxon>
        <taxon>Ecdysozoa</taxon>
        <taxon>Nematoda</taxon>
        <taxon>Chromadorea</taxon>
        <taxon>Rhabditida</taxon>
        <taxon>Rhabditina</taxon>
        <taxon>Rhabditomorpha</taxon>
        <taxon>Rhabditoidea</taxon>
        <taxon>Rhabditidae</taxon>
        <taxon>Peloderinae</taxon>
        <taxon>Caenorhabditis</taxon>
    </lineage>
</organism>
<gene>
    <name type="primary">sec-10</name>
    <name type="ORF">C33H5.9</name>
</gene>
<comment type="function">
    <text evidence="1">Component of the exocyst complex involved in the docking of exocytic vesicles with fusion sites on the plasma membrane.</text>
</comment>
<comment type="subunit">
    <text evidence="1">The exocyst complex is composed of sec-3/exoc1, sec-5/exoc2, sec-6/exoc3, sec-8/exoc4, sec-10/exoc5, sec-15/exoc6, exo-70/exoc7 and exo-84/exoc8.</text>
</comment>
<comment type="similarity">
    <text evidence="3">Belongs to the SEC10 family.</text>
</comment>
<protein>
    <recommendedName>
        <fullName>Exocyst complex component 5</fullName>
    </recommendedName>
    <alternativeName>
        <fullName>Exocyst complex component Sec10</fullName>
    </alternativeName>
</protein>
<evidence type="ECO:0000250" key="1"/>
<evidence type="ECO:0000255" key="2"/>
<evidence type="ECO:0000305" key="3"/>
<proteinExistence type="inferred from homology"/>
<sequence length="659" mass="75751">MRFEEEIGSLQMLCDQFQNKINTLEKQMNEEKKDYVQKLHRLHEKNGEAIDKMKQLDHTMQAVSTKVVHLGDQLESVDQPRSRAHDAHQLMQHFDEFLSDQPLNSMIFTDPDKLLESADLVHKLYSISQELNKDKFANVQARIGQRYKVVEDLLIEEFVRSQRDEKKMAEVAKILSEFKGYSGCVDRYVDFLCQSIHPRGDGGEILADCLQLCRTQQPRISAIFPSPHTVMQKLVLNIFTGRMKETITARLRECKDTDDQEHYLRDLAYLYSSTLKMCKELEKLHISPDSAFLSTLTDSIFQRYIATYCSEELKYLNDQCSNLLQRFYESKKHVKKQIGGGLHELKRDVAARLMNVETYGGETFVAEDVAISILQETKNAFGRANQLCDKEELPRHVENIVDVLLKYLYGEHLDYAVETGLAGISLAESKTEPPAYFFSVVAKCTSVILLMIKQFEDPIFPIIKETIVEPSVAKKWQQSLRSLESKMSLGLERQLNSIVGYVKFLFSEQKKTDFRPDSQQIDIRVSPQCQLASRFLANQVAAMELGCDGENLEALQSDLATRLFKFMLTHIQQFTYNSTGAVLLLCDVGELRTLVSKWRVQNALTQWESLQALTNLLAVLPDQVNETAHSSLLENVDRQLIHDFVRLRTDFRSIKNFQI</sequence>
<accession>Q18406</accession>
<dbReference type="EMBL" id="FO080768">
    <property type="protein sequence ID" value="CCD66571.1"/>
    <property type="molecule type" value="Genomic_DNA"/>
</dbReference>
<dbReference type="PIR" id="T34142">
    <property type="entry name" value="T34142"/>
</dbReference>
<dbReference type="RefSeq" id="NP_501283.2">
    <property type="nucleotide sequence ID" value="NM_068882.5"/>
</dbReference>
<dbReference type="SMR" id="Q18406"/>
<dbReference type="BioGRID" id="42680">
    <property type="interactions" value="4"/>
</dbReference>
<dbReference type="ComplexPortal" id="CPX-712">
    <property type="entry name" value="Exocyst"/>
</dbReference>
<dbReference type="DIP" id="DIP-25121N"/>
<dbReference type="FunCoup" id="Q18406">
    <property type="interactions" value="3380"/>
</dbReference>
<dbReference type="STRING" id="6239.C33H5.9.1"/>
<dbReference type="PaxDb" id="6239-C33H5.9"/>
<dbReference type="PeptideAtlas" id="Q18406"/>
<dbReference type="EnsemblMetazoa" id="C33H5.9.1">
    <property type="protein sequence ID" value="C33H5.9.1"/>
    <property type="gene ID" value="WBGene00016376"/>
</dbReference>
<dbReference type="GeneID" id="177562"/>
<dbReference type="KEGG" id="cel:CELE_C33H5.9"/>
<dbReference type="UCSC" id="C33H5.9">
    <property type="organism name" value="c. elegans"/>
</dbReference>
<dbReference type="AGR" id="WB:WBGene00016376"/>
<dbReference type="CTD" id="177562"/>
<dbReference type="WormBase" id="C33H5.9">
    <property type="protein sequence ID" value="CE50274"/>
    <property type="gene ID" value="WBGene00016376"/>
    <property type="gene designation" value="sec-10"/>
</dbReference>
<dbReference type="eggNOG" id="KOG3745">
    <property type="taxonomic scope" value="Eukaryota"/>
</dbReference>
<dbReference type="GeneTree" id="ENSGT00390000012837"/>
<dbReference type="HOGENOM" id="CLU_020771_1_1_1"/>
<dbReference type="InParanoid" id="Q18406"/>
<dbReference type="OrthoDB" id="125856at2759"/>
<dbReference type="PhylomeDB" id="Q18406"/>
<dbReference type="Reactome" id="R-CEL-264876">
    <property type="pathway name" value="Insulin processing"/>
</dbReference>
<dbReference type="Reactome" id="R-CEL-5620916">
    <property type="pathway name" value="VxPx cargo-targeting to cilium"/>
</dbReference>
<dbReference type="SignaLink" id="Q18406"/>
<dbReference type="PRO" id="PR:Q18406"/>
<dbReference type="Proteomes" id="UP000001940">
    <property type="component" value="Chromosome IV"/>
</dbReference>
<dbReference type="Bgee" id="WBGene00016376">
    <property type="expression patterns" value="Expressed in germ line (C elegans) and 4 other cell types or tissues"/>
</dbReference>
<dbReference type="GO" id="GO:0000145">
    <property type="term" value="C:exocyst"/>
    <property type="evidence" value="ECO:0000250"/>
    <property type="project" value="WormBase"/>
</dbReference>
<dbReference type="GO" id="GO:0006887">
    <property type="term" value="P:exocytosis"/>
    <property type="evidence" value="ECO:0000318"/>
    <property type="project" value="GO_Central"/>
</dbReference>
<dbReference type="GO" id="GO:0006893">
    <property type="term" value="P:Golgi to plasma membrane transport"/>
    <property type="evidence" value="ECO:0000318"/>
    <property type="project" value="GO_Central"/>
</dbReference>
<dbReference type="GO" id="GO:0015031">
    <property type="term" value="P:protein transport"/>
    <property type="evidence" value="ECO:0007669"/>
    <property type="project" value="UniProtKB-KW"/>
</dbReference>
<dbReference type="GO" id="GO:0090522">
    <property type="term" value="P:vesicle tethering involved in exocytosis"/>
    <property type="evidence" value="ECO:0000315"/>
    <property type="project" value="ComplexPortal"/>
</dbReference>
<dbReference type="InterPro" id="IPR009976">
    <property type="entry name" value="Sec10-like"/>
</dbReference>
<dbReference type="InterPro" id="IPR048627">
    <property type="entry name" value="Sec10_HB"/>
</dbReference>
<dbReference type="InterPro" id="IPR048625">
    <property type="entry name" value="Sec10_N"/>
</dbReference>
<dbReference type="PANTHER" id="PTHR12100:SF0">
    <property type="entry name" value="EXOCYST COMPLEX COMPONENT 5"/>
    <property type="match status" value="1"/>
</dbReference>
<dbReference type="PANTHER" id="PTHR12100">
    <property type="entry name" value="SEC10"/>
    <property type="match status" value="1"/>
</dbReference>
<dbReference type="Pfam" id="PF07393">
    <property type="entry name" value="Sec10_HB"/>
    <property type="match status" value="1"/>
</dbReference>
<dbReference type="Pfam" id="PF20667">
    <property type="entry name" value="Sec10_N"/>
    <property type="match status" value="1"/>
</dbReference>
<name>EXOC5_CAEEL</name>